<feature type="signal peptide" evidence="2">
    <location>
        <begin position="1"/>
        <end position="21"/>
    </location>
</feature>
<feature type="chain" id="PRO_0000430612" description="Glycerophosphodiester phosphodiesterase GDPD5" evidence="2">
    <location>
        <begin position="22"/>
        <end position="392"/>
    </location>
</feature>
<feature type="domain" description="GP-PDE" evidence="2">
    <location>
        <begin position="44"/>
        <end position="362"/>
    </location>
</feature>
<feature type="glycosylation site" description="N-linked (GlcNAc...) asparagine" evidence="3">
    <location>
        <position position="120"/>
    </location>
</feature>
<feature type="glycosylation site" description="N-linked (GlcNAc...) asparagine" evidence="3">
    <location>
        <position position="239"/>
    </location>
</feature>
<feature type="glycosylation site" description="N-linked (GlcNAc...) asparagine" evidence="3">
    <location>
        <position position="260"/>
    </location>
</feature>
<feature type="glycosylation site" description="N-linked (GlcNAc...) asparagine" evidence="3">
    <location>
        <position position="329"/>
    </location>
</feature>
<evidence type="ECO:0000250" key="1">
    <source>
        <dbReference type="UniProtKB" id="Q9SGA2"/>
    </source>
</evidence>
<evidence type="ECO:0000255" key="2"/>
<evidence type="ECO:0000255" key="3">
    <source>
        <dbReference type="PROSITE-ProRule" id="PRU00498"/>
    </source>
</evidence>
<evidence type="ECO:0000269" key="4">
    <source>
    </source>
</evidence>
<evidence type="ECO:0000303" key="5">
    <source>
    </source>
</evidence>
<evidence type="ECO:0000303" key="6">
    <source>
    </source>
</evidence>
<evidence type="ECO:0000305" key="7"/>
<evidence type="ECO:0000312" key="8">
    <source>
        <dbReference type="Araport" id="AT1G74210"/>
    </source>
</evidence>
<evidence type="ECO:0000312" key="9">
    <source>
        <dbReference type="EMBL" id="AAG52406.1"/>
    </source>
</evidence>
<dbReference type="EC" id="3.1.4.46" evidence="1"/>
<dbReference type="EMBL" id="AC020579">
    <property type="protein sequence ID" value="AAG52406.1"/>
    <property type="molecule type" value="Genomic_DNA"/>
</dbReference>
<dbReference type="EMBL" id="CP002684">
    <property type="protein sequence ID" value="AEE35566.1"/>
    <property type="molecule type" value="Genomic_DNA"/>
</dbReference>
<dbReference type="EMBL" id="AY064037">
    <property type="protein sequence ID" value="AAL36393.1"/>
    <property type="molecule type" value="mRNA"/>
</dbReference>
<dbReference type="EMBL" id="AY142654">
    <property type="protein sequence ID" value="AAN13192.1"/>
    <property type="molecule type" value="mRNA"/>
</dbReference>
<dbReference type="EMBL" id="AY086343">
    <property type="protein sequence ID" value="AAM64411.1"/>
    <property type="molecule type" value="mRNA"/>
</dbReference>
<dbReference type="PIR" id="D96770">
    <property type="entry name" value="D96770"/>
</dbReference>
<dbReference type="RefSeq" id="NP_177561.1">
    <property type="nucleotide sequence ID" value="NM_106081.3"/>
</dbReference>
<dbReference type="SMR" id="Q9C907"/>
<dbReference type="FunCoup" id="Q9C907">
    <property type="interactions" value="35"/>
</dbReference>
<dbReference type="STRING" id="3702.Q9C907"/>
<dbReference type="GlyCosmos" id="Q9C907">
    <property type="glycosylation" value="4 sites, No reported glycans"/>
</dbReference>
<dbReference type="GlyGen" id="Q9C907">
    <property type="glycosylation" value="4 sites"/>
</dbReference>
<dbReference type="PaxDb" id="3702-AT1G74210.1"/>
<dbReference type="ProteomicsDB" id="247118"/>
<dbReference type="EnsemblPlants" id="AT1G74210.1">
    <property type="protein sequence ID" value="AT1G74210.1"/>
    <property type="gene ID" value="AT1G74210"/>
</dbReference>
<dbReference type="GeneID" id="843761"/>
<dbReference type="Gramene" id="AT1G74210.1">
    <property type="protein sequence ID" value="AT1G74210.1"/>
    <property type="gene ID" value="AT1G74210"/>
</dbReference>
<dbReference type="KEGG" id="ath:AT1G74210"/>
<dbReference type="Araport" id="AT1G74210"/>
<dbReference type="TAIR" id="AT1G74210">
    <property type="gene designation" value="GDPD5"/>
</dbReference>
<dbReference type="eggNOG" id="KOG2258">
    <property type="taxonomic scope" value="Eukaryota"/>
</dbReference>
<dbReference type="HOGENOM" id="CLU_030226_4_1_1"/>
<dbReference type="InParanoid" id="Q9C907"/>
<dbReference type="OMA" id="ARHEPNI"/>
<dbReference type="OrthoDB" id="1058301at2759"/>
<dbReference type="PhylomeDB" id="Q9C907"/>
<dbReference type="BioCyc" id="ARA:AT1G74210-MONOMER"/>
<dbReference type="CD-CODE" id="4299E36E">
    <property type="entry name" value="Nucleolus"/>
</dbReference>
<dbReference type="PRO" id="PR:Q9C907"/>
<dbReference type="Proteomes" id="UP000006548">
    <property type="component" value="Chromosome 1"/>
</dbReference>
<dbReference type="ExpressionAtlas" id="Q9C907">
    <property type="expression patterns" value="baseline and differential"/>
</dbReference>
<dbReference type="GO" id="GO:0005829">
    <property type="term" value="C:cytosol"/>
    <property type="evidence" value="ECO:0007005"/>
    <property type="project" value="TAIR"/>
</dbReference>
<dbReference type="GO" id="GO:0005576">
    <property type="term" value="C:extracellular region"/>
    <property type="evidence" value="ECO:0007669"/>
    <property type="project" value="UniProtKB-KW"/>
</dbReference>
<dbReference type="GO" id="GO:0000325">
    <property type="term" value="C:plant-type vacuole"/>
    <property type="evidence" value="ECO:0007005"/>
    <property type="project" value="TAIR"/>
</dbReference>
<dbReference type="GO" id="GO:0008889">
    <property type="term" value="F:glycerophosphodiester phosphodiesterase activity"/>
    <property type="evidence" value="ECO:0007669"/>
    <property type="project" value="UniProtKB-EC"/>
</dbReference>
<dbReference type="GO" id="GO:0006071">
    <property type="term" value="P:glycerol metabolic process"/>
    <property type="evidence" value="ECO:0007669"/>
    <property type="project" value="UniProtKB-KW"/>
</dbReference>
<dbReference type="GO" id="GO:0006629">
    <property type="term" value="P:lipid metabolic process"/>
    <property type="evidence" value="ECO:0007669"/>
    <property type="project" value="InterPro"/>
</dbReference>
<dbReference type="CDD" id="cd08602">
    <property type="entry name" value="GDPD_ScGlpQ1_like"/>
    <property type="match status" value="1"/>
</dbReference>
<dbReference type="FunFam" id="3.20.20.190:FF:000023">
    <property type="entry name" value="Glycerophosphodiester phosphodiesterase GDPD5"/>
    <property type="match status" value="1"/>
</dbReference>
<dbReference type="Gene3D" id="3.20.20.190">
    <property type="entry name" value="Phosphatidylinositol (PI) phosphodiesterase"/>
    <property type="match status" value="1"/>
</dbReference>
<dbReference type="InterPro" id="IPR030395">
    <property type="entry name" value="GP_PDE_dom"/>
</dbReference>
<dbReference type="InterPro" id="IPR017946">
    <property type="entry name" value="PLC-like_Pdiesterase_TIM-brl"/>
</dbReference>
<dbReference type="PANTHER" id="PTHR43620:SF7">
    <property type="entry name" value="GLYCEROPHOSPHODIESTER PHOSPHODIESTERASE GDPD5-RELATED"/>
    <property type="match status" value="1"/>
</dbReference>
<dbReference type="PANTHER" id="PTHR43620">
    <property type="entry name" value="GLYCEROPHOSPHORYL DIESTER PHOSPHODIESTERASE"/>
    <property type="match status" value="1"/>
</dbReference>
<dbReference type="Pfam" id="PF03009">
    <property type="entry name" value="GDPD"/>
    <property type="match status" value="1"/>
</dbReference>
<dbReference type="SUPFAM" id="SSF51695">
    <property type="entry name" value="PLC-like phosphodiesterases"/>
    <property type="match status" value="1"/>
</dbReference>
<dbReference type="PROSITE" id="PS51704">
    <property type="entry name" value="GP_PDE"/>
    <property type="match status" value="1"/>
</dbReference>
<organism>
    <name type="scientific">Arabidopsis thaliana</name>
    <name type="common">Mouse-ear cress</name>
    <dbReference type="NCBI Taxonomy" id="3702"/>
    <lineage>
        <taxon>Eukaryota</taxon>
        <taxon>Viridiplantae</taxon>
        <taxon>Streptophyta</taxon>
        <taxon>Embryophyta</taxon>
        <taxon>Tracheophyta</taxon>
        <taxon>Spermatophyta</taxon>
        <taxon>Magnoliopsida</taxon>
        <taxon>eudicotyledons</taxon>
        <taxon>Gunneridae</taxon>
        <taxon>Pentapetalae</taxon>
        <taxon>rosids</taxon>
        <taxon>malvids</taxon>
        <taxon>Brassicales</taxon>
        <taxon>Brassicaceae</taxon>
        <taxon>Camelineae</taxon>
        <taxon>Arabidopsis</taxon>
    </lineage>
</organism>
<proteinExistence type="evidence at transcript level"/>
<comment type="catalytic activity">
    <reaction evidence="1">
        <text>a sn-glycero-3-phosphodiester + H2O = an alcohol + sn-glycerol 3-phosphate + H(+)</text>
        <dbReference type="Rhea" id="RHEA:12969"/>
        <dbReference type="ChEBI" id="CHEBI:15377"/>
        <dbReference type="ChEBI" id="CHEBI:15378"/>
        <dbReference type="ChEBI" id="CHEBI:30879"/>
        <dbReference type="ChEBI" id="CHEBI:57597"/>
        <dbReference type="ChEBI" id="CHEBI:83408"/>
        <dbReference type="EC" id="3.1.4.46"/>
    </reaction>
</comment>
<comment type="subcellular location">
    <subcellularLocation>
        <location evidence="5">Secreted</location>
        <location evidence="5">Cell wall</location>
    </subcellularLocation>
    <subcellularLocation>
        <location evidence="5">Vacuole</location>
    </subcellularLocation>
</comment>
<comment type="tissue specificity">
    <text evidence="4">Expressed in roots, rosette and cauline leaves, stems, flowers and siliques.</text>
</comment>
<comment type="induction">
    <text evidence="4">By phosphate starvation.</text>
</comment>
<comment type="similarity">
    <text evidence="7">Belongs to the glycerophosphoryl diester phosphodiesterase family.</text>
</comment>
<gene>
    <name evidence="6" type="primary">GDPD5</name>
    <name evidence="8" type="ordered locus">At1g74210</name>
    <name evidence="9" type="ORF">F1O17.12</name>
</gene>
<reference key="1">
    <citation type="journal article" date="2000" name="Nature">
        <title>Sequence and analysis of chromosome 1 of the plant Arabidopsis thaliana.</title>
        <authorList>
            <person name="Theologis A."/>
            <person name="Ecker J.R."/>
            <person name="Palm C.J."/>
            <person name="Federspiel N.A."/>
            <person name="Kaul S."/>
            <person name="White O."/>
            <person name="Alonso J."/>
            <person name="Altafi H."/>
            <person name="Araujo R."/>
            <person name="Bowman C.L."/>
            <person name="Brooks S.Y."/>
            <person name="Buehler E."/>
            <person name="Chan A."/>
            <person name="Chao Q."/>
            <person name="Chen H."/>
            <person name="Cheuk R.F."/>
            <person name="Chin C.W."/>
            <person name="Chung M.K."/>
            <person name="Conn L."/>
            <person name="Conway A.B."/>
            <person name="Conway A.R."/>
            <person name="Creasy T.H."/>
            <person name="Dewar K."/>
            <person name="Dunn P."/>
            <person name="Etgu P."/>
            <person name="Feldblyum T.V."/>
            <person name="Feng J.-D."/>
            <person name="Fong B."/>
            <person name="Fujii C.Y."/>
            <person name="Gill J.E."/>
            <person name="Goldsmith A.D."/>
            <person name="Haas B."/>
            <person name="Hansen N.F."/>
            <person name="Hughes B."/>
            <person name="Huizar L."/>
            <person name="Hunter J.L."/>
            <person name="Jenkins J."/>
            <person name="Johnson-Hopson C."/>
            <person name="Khan S."/>
            <person name="Khaykin E."/>
            <person name="Kim C.J."/>
            <person name="Koo H.L."/>
            <person name="Kremenetskaia I."/>
            <person name="Kurtz D.B."/>
            <person name="Kwan A."/>
            <person name="Lam B."/>
            <person name="Langin-Hooper S."/>
            <person name="Lee A."/>
            <person name="Lee J.M."/>
            <person name="Lenz C.A."/>
            <person name="Li J.H."/>
            <person name="Li Y.-P."/>
            <person name="Lin X."/>
            <person name="Liu S.X."/>
            <person name="Liu Z.A."/>
            <person name="Luros J.S."/>
            <person name="Maiti R."/>
            <person name="Marziali A."/>
            <person name="Militscher J."/>
            <person name="Miranda M."/>
            <person name="Nguyen M."/>
            <person name="Nierman W.C."/>
            <person name="Osborne B.I."/>
            <person name="Pai G."/>
            <person name="Peterson J."/>
            <person name="Pham P.K."/>
            <person name="Rizzo M."/>
            <person name="Rooney T."/>
            <person name="Rowley D."/>
            <person name="Sakano H."/>
            <person name="Salzberg S.L."/>
            <person name="Schwartz J.R."/>
            <person name="Shinn P."/>
            <person name="Southwick A.M."/>
            <person name="Sun H."/>
            <person name="Tallon L.J."/>
            <person name="Tambunga G."/>
            <person name="Toriumi M.J."/>
            <person name="Town C.D."/>
            <person name="Utterback T."/>
            <person name="Van Aken S."/>
            <person name="Vaysberg M."/>
            <person name="Vysotskaia V.S."/>
            <person name="Walker M."/>
            <person name="Wu D."/>
            <person name="Yu G."/>
            <person name="Fraser C.M."/>
            <person name="Venter J.C."/>
            <person name="Davis R.W."/>
        </authorList>
    </citation>
    <scope>NUCLEOTIDE SEQUENCE [LARGE SCALE GENOMIC DNA]</scope>
    <source>
        <strain>cv. Columbia</strain>
    </source>
</reference>
<reference key="2">
    <citation type="journal article" date="2017" name="Plant J.">
        <title>Araport11: a complete reannotation of the Arabidopsis thaliana reference genome.</title>
        <authorList>
            <person name="Cheng C.Y."/>
            <person name="Krishnakumar V."/>
            <person name="Chan A.P."/>
            <person name="Thibaud-Nissen F."/>
            <person name="Schobel S."/>
            <person name="Town C.D."/>
        </authorList>
    </citation>
    <scope>GENOME REANNOTATION</scope>
    <source>
        <strain>cv. Columbia</strain>
    </source>
</reference>
<reference key="3">
    <citation type="journal article" date="2003" name="Science">
        <title>Empirical analysis of transcriptional activity in the Arabidopsis genome.</title>
        <authorList>
            <person name="Yamada K."/>
            <person name="Lim J."/>
            <person name="Dale J.M."/>
            <person name="Chen H."/>
            <person name="Shinn P."/>
            <person name="Palm C.J."/>
            <person name="Southwick A.M."/>
            <person name="Wu H.C."/>
            <person name="Kim C.J."/>
            <person name="Nguyen M."/>
            <person name="Pham P.K."/>
            <person name="Cheuk R.F."/>
            <person name="Karlin-Newmann G."/>
            <person name="Liu S.X."/>
            <person name="Lam B."/>
            <person name="Sakano H."/>
            <person name="Wu T."/>
            <person name="Yu G."/>
            <person name="Miranda M."/>
            <person name="Quach H.L."/>
            <person name="Tripp M."/>
            <person name="Chang C.H."/>
            <person name="Lee J.M."/>
            <person name="Toriumi M.J."/>
            <person name="Chan M.M."/>
            <person name="Tang C.C."/>
            <person name="Onodera C.S."/>
            <person name="Deng J.M."/>
            <person name="Akiyama K."/>
            <person name="Ansari Y."/>
            <person name="Arakawa T."/>
            <person name="Banh J."/>
            <person name="Banno F."/>
            <person name="Bowser L."/>
            <person name="Brooks S.Y."/>
            <person name="Carninci P."/>
            <person name="Chao Q."/>
            <person name="Choy N."/>
            <person name="Enju A."/>
            <person name="Goldsmith A.D."/>
            <person name="Gurjal M."/>
            <person name="Hansen N.F."/>
            <person name="Hayashizaki Y."/>
            <person name="Johnson-Hopson C."/>
            <person name="Hsuan V.W."/>
            <person name="Iida K."/>
            <person name="Karnes M."/>
            <person name="Khan S."/>
            <person name="Koesema E."/>
            <person name="Ishida J."/>
            <person name="Jiang P.X."/>
            <person name="Jones T."/>
            <person name="Kawai J."/>
            <person name="Kamiya A."/>
            <person name="Meyers C."/>
            <person name="Nakajima M."/>
            <person name="Narusaka M."/>
            <person name="Seki M."/>
            <person name="Sakurai T."/>
            <person name="Satou M."/>
            <person name="Tamse R."/>
            <person name="Vaysberg M."/>
            <person name="Wallender E.K."/>
            <person name="Wong C."/>
            <person name="Yamamura Y."/>
            <person name="Yuan S."/>
            <person name="Shinozaki K."/>
            <person name="Davis R.W."/>
            <person name="Theologis A."/>
            <person name="Ecker J.R."/>
        </authorList>
    </citation>
    <scope>NUCLEOTIDE SEQUENCE [LARGE SCALE MRNA]</scope>
    <source>
        <strain>cv. Columbia</strain>
    </source>
</reference>
<reference key="4">
    <citation type="submission" date="2002-03" db="EMBL/GenBank/DDBJ databases">
        <title>Full-length cDNA from Arabidopsis thaliana.</title>
        <authorList>
            <person name="Brover V.V."/>
            <person name="Troukhan M.E."/>
            <person name="Alexandrov N.A."/>
            <person name="Lu Y.-P."/>
            <person name="Flavell R.B."/>
            <person name="Feldmann K.A."/>
        </authorList>
    </citation>
    <scope>NUCLEOTIDE SEQUENCE [LARGE SCALE MRNA]</scope>
</reference>
<reference key="5">
    <citation type="journal article" date="2004" name="Biochem. J.">
        <title>Identification and characterization of plant glycerophosphodiester phosphodiesterase.</title>
        <authorList>
            <person name="Van Der Rest B."/>
            <person name="Rolland N."/>
            <person name="Boisson A.M."/>
            <person name="Ferro M."/>
            <person name="Bligny R."/>
            <person name="Douce R."/>
        </authorList>
    </citation>
    <scope>SUBCELLULAR LOCATION</scope>
</reference>
<reference key="6">
    <citation type="journal article" date="2011" name="Plant J.">
        <title>Characterization of the Arabidopsis glycerophosphodiester phosphodiesterase (GDPD) family reveals a role of the plastid-localized AtGDPD1 in maintaining cellular phosphate homeostasis under phosphate starvation.</title>
        <authorList>
            <person name="Cheng Y."/>
            <person name="Zhou W."/>
            <person name="El Sheery N.I."/>
            <person name="Peters C."/>
            <person name="Li M."/>
            <person name="Wang X."/>
            <person name="Huang J."/>
        </authorList>
    </citation>
    <scope>TISSUE SPECIFICITY</scope>
    <scope>INDUCTION</scope>
    <scope>GENE FAMILY</scope>
    <scope>NOMENCLATURE</scope>
</reference>
<sequence length="392" mass="45021">MILTRCLPLIWLSLLTVCAAGRTLHPLPVKGPKTVKLQLQTSRPYNIAHRGSNGEIPEETTAAYLKAIEEGTDFIETDILSSKDGVLICFHDCILDETTNVASHKEFADRKRTYDVQGFNITGFFTFDFTLKELKQLRIKQRYAFRDQQYNGMYPIITFEEFLTIARDAPRVVGIYPEIKNPVLMNQHVKWPGGKKFEDKVVETLKKYGYGGSYLSKKWLKKPLFIQSFAPTSLVYISNLTDSPKVLLIDDVTMPTQDTNQTYAEITSDAYFEYIKQYVVGIGPWKDTIVPVNNNYVLAPTDLVKRAHAHNLQVHPYTYRNEHEFLHYNFSQDPYKEYDYWINEIGVDGLFTDFTGSLHNFQEWTSPLPDTSKSPRQLLSQIASLVLPYAKA</sequence>
<accession>Q9C907</accession>
<keyword id="KW-0134">Cell wall</keyword>
<keyword id="KW-0319">Glycerol metabolism</keyword>
<keyword id="KW-0325">Glycoprotein</keyword>
<keyword id="KW-0378">Hydrolase</keyword>
<keyword id="KW-1185">Reference proteome</keyword>
<keyword id="KW-0964">Secreted</keyword>
<keyword id="KW-0732">Signal</keyword>
<keyword id="KW-0926">Vacuole</keyword>
<protein>
    <recommendedName>
        <fullName evidence="7">Glycerophosphodiester phosphodiesterase GDPD5</fullName>
        <ecNumber evidence="1">3.1.4.46</ecNumber>
    </recommendedName>
    <alternativeName>
        <fullName evidence="6">Glycerophosphodiester phosphodiesterase 5</fullName>
        <shortName evidence="6">ATGDPD5</shortName>
    </alternativeName>
</protein>
<name>GDPD5_ARATH</name>